<keyword id="KW-0002">3D-structure</keyword>
<keyword id="KW-0963">Cytoplasm</keyword>
<keyword id="KW-1185">Reference proteome</keyword>
<gene>
    <name type="primary">cutA</name>
    <name type="ordered locus">TM_1056</name>
</gene>
<name>CUTA_THEMA</name>
<organism>
    <name type="scientific">Thermotoga maritima (strain ATCC 43589 / DSM 3109 / JCM 10099 / NBRC 100826 / MSB8)</name>
    <dbReference type="NCBI Taxonomy" id="243274"/>
    <lineage>
        <taxon>Bacteria</taxon>
        <taxon>Thermotogati</taxon>
        <taxon>Thermotogota</taxon>
        <taxon>Thermotogae</taxon>
        <taxon>Thermotogales</taxon>
        <taxon>Thermotogaceae</taxon>
        <taxon>Thermotoga</taxon>
    </lineage>
</organism>
<evidence type="ECO:0000250" key="1"/>
<evidence type="ECO:0000305" key="2"/>
<evidence type="ECO:0007829" key="3">
    <source>
        <dbReference type="PDB" id="1KR4"/>
    </source>
</evidence>
<protein>
    <recommendedName>
        <fullName>Divalent-cation tolerance protein CutA</fullName>
    </recommendedName>
</protein>
<feature type="chain" id="PRO_0000157131" description="Divalent-cation tolerance protein CutA">
    <location>
        <begin position="1"/>
        <end position="101"/>
    </location>
</feature>
<feature type="strand" evidence="3">
    <location>
        <begin position="1"/>
        <end position="10"/>
    </location>
</feature>
<feature type="helix" evidence="3">
    <location>
        <begin position="11"/>
        <end position="23"/>
    </location>
</feature>
<feature type="strand" evidence="3">
    <location>
        <begin position="28"/>
        <end position="41"/>
    </location>
</feature>
<feature type="strand" evidence="3">
    <location>
        <begin position="44"/>
        <end position="58"/>
    </location>
</feature>
<feature type="helix" evidence="3">
    <location>
        <begin position="59"/>
        <end position="61"/>
    </location>
</feature>
<feature type="helix" evidence="3">
    <location>
        <begin position="62"/>
        <end position="72"/>
    </location>
</feature>
<feature type="strand" evidence="3">
    <location>
        <begin position="74"/>
        <end position="77"/>
    </location>
</feature>
<feature type="strand" evidence="3">
    <location>
        <begin position="80"/>
        <end position="83"/>
    </location>
</feature>
<feature type="helix" evidence="3">
    <location>
        <begin position="90"/>
        <end position="99"/>
    </location>
</feature>
<dbReference type="EMBL" id="AE000512">
    <property type="protein sequence ID" value="AAD36133.1"/>
    <property type="molecule type" value="Genomic_DNA"/>
</dbReference>
<dbReference type="PIR" id="B72302">
    <property type="entry name" value="B72302"/>
</dbReference>
<dbReference type="RefSeq" id="NP_228862.1">
    <property type="nucleotide sequence ID" value="NC_000853.1"/>
</dbReference>
<dbReference type="RefSeq" id="WP_004080448.1">
    <property type="nucleotide sequence ID" value="NZ_CP011107.1"/>
</dbReference>
<dbReference type="PDB" id="1KR4">
    <property type="method" value="X-ray"/>
    <property type="resolution" value="1.40 A"/>
    <property type="chains" value="A=1-101"/>
</dbReference>
<dbReference type="PDB" id="1O5J">
    <property type="method" value="X-ray"/>
    <property type="resolution" value="1.95 A"/>
    <property type="chains" value="A=1-101"/>
</dbReference>
<dbReference type="PDB" id="1VHF">
    <property type="method" value="X-ray"/>
    <property type="resolution" value="1.54 A"/>
    <property type="chains" value="A=2-101"/>
</dbReference>
<dbReference type="PDBsum" id="1KR4"/>
<dbReference type="PDBsum" id="1O5J"/>
<dbReference type="PDBsum" id="1VHF"/>
<dbReference type="SMR" id="Q9X0E6"/>
<dbReference type="STRING" id="243274.TM_1056"/>
<dbReference type="PaxDb" id="243274-THEMA_09080"/>
<dbReference type="EnsemblBacteria" id="AAD36133">
    <property type="protein sequence ID" value="AAD36133"/>
    <property type="gene ID" value="TM_1056"/>
</dbReference>
<dbReference type="KEGG" id="tma:TM1056"/>
<dbReference type="KEGG" id="tmi:THEMA_09080"/>
<dbReference type="KEGG" id="tmm:Tmari_1060"/>
<dbReference type="KEGG" id="tmw:THMA_1078"/>
<dbReference type="eggNOG" id="COG1324">
    <property type="taxonomic scope" value="Bacteria"/>
</dbReference>
<dbReference type="InParanoid" id="Q9X0E6"/>
<dbReference type="OrthoDB" id="37622at2"/>
<dbReference type="EvolutionaryTrace" id="Q9X0E6"/>
<dbReference type="Proteomes" id="UP000008183">
    <property type="component" value="Chromosome"/>
</dbReference>
<dbReference type="GO" id="GO:0005737">
    <property type="term" value="C:cytoplasm"/>
    <property type="evidence" value="ECO:0007669"/>
    <property type="project" value="UniProtKB-SubCell"/>
</dbReference>
<dbReference type="GO" id="GO:0005507">
    <property type="term" value="F:copper ion binding"/>
    <property type="evidence" value="ECO:0000318"/>
    <property type="project" value="GO_Central"/>
</dbReference>
<dbReference type="GO" id="GO:0010038">
    <property type="term" value="P:response to metal ion"/>
    <property type="evidence" value="ECO:0007669"/>
    <property type="project" value="InterPro"/>
</dbReference>
<dbReference type="Gene3D" id="3.30.70.120">
    <property type="match status" value="1"/>
</dbReference>
<dbReference type="InterPro" id="IPR053426">
    <property type="entry name" value="CutA_tolerance"/>
</dbReference>
<dbReference type="InterPro" id="IPR004323">
    <property type="entry name" value="Ion_tolerance_CutA"/>
</dbReference>
<dbReference type="InterPro" id="IPR011322">
    <property type="entry name" value="N-reg_PII-like_a/b"/>
</dbReference>
<dbReference type="InterPro" id="IPR015867">
    <property type="entry name" value="N-reg_PII/ATP_PRibTrfase_C"/>
</dbReference>
<dbReference type="NCBIfam" id="NF041095">
    <property type="entry name" value="dival_cat_tol_CutA"/>
    <property type="match status" value="1"/>
</dbReference>
<dbReference type="PANTHER" id="PTHR23419">
    <property type="entry name" value="DIVALENT CATION TOLERANCE CUTA-RELATED"/>
    <property type="match status" value="1"/>
</dbReference>
<dbReference type="PANTHER" id="PTHR23419:SF8">
    <property type="entry name" value="FI09726P"/>
    <property type="match status" value="1"/>
</dbReference>
<dbReference type="Pfam" id="PF03091">
    <property type="entry name" value="CutA1"/>
    <property type="match status" value="1"/>
</dbReference>
<dbReference type="SUPFAM" id="SSF54913">
    <property type="entry name" value="GlnB-like"/>
    <property type="match status" value="1"/>
</dbReference>
<accession>Q9X0E6</accession>
<proteinExistence type="evidence at protein level"/>
<reference key="1">
    <citation type="journal article" date="1999" name="Nature">
        <title>Evidence for lateral gene transfer between Archaea and Bacteria from genome sequence of Thermotoga maritima.</title>
        <authorList>
            <person name="Nelson K.E."/>
            <person name="Clayton R.A."/>
            <person name="Gill S.R."/>
            <person name="Gwinn M.L."/>
            <person name="Dodson R.J."/>
            <person name="Haft D.H."/>
            <person name="Hickey E.K."/>
            <person name="Peterson J.D."/>
            <person name="Nelson W.C."/>
            <person name="Ketchum K.A."/>
            <person name="McDonald L.A."/>
            <person name="Utterback T.R."/>
            <person name="Malek J.A."/>
            <person name="Linher K.D."/>
            <person name="Garrett M.M."/>
            <person name="Stewart A.M."/>
            <person name="Cotton M.D."/>
            <person name="Pratt M.S."/>
            <person name="Phillips C.A."/>
            <person name="Richardson D.L."/>
            <person name="Heidelberg J.F."/>
            <person name="Sutton G.G."/>
            <person name="Fleischmann R.D."/>
            <person name="Eisen J.A."/>
            <person name="White O."/>
            <person name="Salzberg S.L."/>
            <person name="Smith H.O."/>
            <person name="Venter J.C."/>
            <person name="Fraser C.M."/>
        </authorList>
    </citation>
    <scope>NUCLEOTIDE SEQUENCE [LARGE SCALE GENOMIC DNA]</scope>
    <source>
        <strain>ATCC 43589 / DSM 3109 / JCM 10099 / NBRC 100826 / MSB8</strain>
    </source>
</reference>
<reference key="2">
    <citation type="journal article" date="2004" name="Proteins">
        <title>X-ray crystal structure of CutA from Thermotoga maritima at 1.4 A resolution.</title>
        <authorList>
            <person name="Savchenko A."/>
            <person name="Skarina T."/>
            <person name="Evdokimova E."/>
            <person name="Watson J.D."/>
            <person name="Laskowski R."/>
            <person name="Arrowsmith C.H."/>
            <person name="Edwards A.M."/>
            <person name="Joachimiak A."/>
            <person name="Zhang R.-G."/>
        </authorList>
    </citation>
    <scope>X-RAY CRYSTALLOGRAPHY (1.4 ANGSTROMS)</scope>
</reference>
<comment type="function">
    <text evidence="1">Involved in resistance toward heavy metals.</text>
</comment>
<comment type="subunit">
    <text>Homotrimer.</text>
</comment>
<comment type="subcellular location">
    <subcellularLocation>
        <location>Cytoplasm</location>
    </subcellularLocation>
</comment>
<comment type="similarity">
    <text evidence="2">Belongs to the CutA family.</text>
</comment>
<sequence>MILVYSTFPNEEKALEIGRKLLEKRLIACFNAFEIRSGYWWKGEIVQDKEWAAIFKTTEEKEKELYEELRKLHPYETPAIFTLKVENVLTEYMNWLRESVL</sequence>